<sequence length="517" mass="61438">MAIRLNPKVRRFLLDKCRQKRYGFLFLGCIFAILYCMGTWPFFAKDIVHDPNNLPYSLQDYSTDKDEPFFRGCTDTKLYLQNPAYSKMNASFVMLTRNEEIEDVLKTMRSIEGHFNKWFKYPYVFLNDDPFTDHFKDQIQAATNATVEFGTVDEIMWEFPAKVRNSLQFKASLEDQNDRGIMYGNMESYHKMCRFYSGIFYKHPLVSKYEWYWRIEPDVDFFCDISYDPFFEMAKHNKKYGFTVLITELYWTVPNLFRTTKSFIKKTAGLKENLGTLWKLFTFNYNILDTDDEEISRWVNFPWDAKPKLTEKLMVDFLLENHGQVNNEEDLEGIQYLVERARSKVPMLEDSLEGEDYNLCHFWSNFEIARVDLFDNEIYNAYFKFLEESGGFWTERWGDAPIHSIGLGMTLDLEDVHYFRDIGYRHSSLQHCPKNALQSQENLNTFDEGYNFGCGCRCVCPKKGEDIEDHSTPCMDIFFELLHGREYEKEFPGCYKPSIKDKDVIEEIRRENFRVIE</sequence>
<comment type="function">
    <text>Possible glycosyltransferase that transfers an alpha-D-mannosyl residue from GDP-mannose into lipid-linked oligosaccharide, forming an alpha-(1-&gt;2)-D-mannosyl-D-mannose linkage.</text>
</comment>
<comment type="subcellular location">
    <subcellularLocation>
        <location evidence="4">Membrane</location>
        <topology evidence="4">Single-pass type II membrane protein</topology>
    </subcellularLocation>
</comment>
<comment type="miscellaneous">
    <text evidence="3">Present with 2890 molecules/cell in log phase SD medium.</text>
</comment>
<comment type="similarity">
    <text evidence="4">Belongs to the glycosyltransferase 15 family.</text>
</comment>
<protein>
    <recommendedName>
        <fullName>Probable mannosyltransferase KTR7</fullName>
        <ecNumber>2.4.1.-</ecNumber>
    </recommendedName>
</protein>
<organism>
    <name type="scientific">Saccharomyces cerevisiae (strain ATCC 204508 / S288c)</name>
    <name type="common">Baker's yeast</name>
    <dbReference type="NCBI Taxonomy" id="559292"/>
    <lineage>
        <taxon>Eukaryota</taxon>
        <taxon>Fungi</taxon>
        <taxon>Dikarya</taxon>
        <taxon>Ascomycota</taxon>
        <taxon>Saccharomycotina</taxon>
        <taxon>Saccharomycetes</taxon>
        <taxon>Saccharomycetales</taxon>
        <taxon>Saccharomycetaceae</taxon>
        <taxon>Saccharomyces</taxon>
    </lineage>
</organism>
<evidence type="ECO:0000250" key="1"/>
<evidence type="ECO:0000255" key="2"/>
<evidence type="ECO:0000269" key="3">
    <source>
    </source>
</evidence>
<evidence type="ECO:0000305" key="4"/>
<feature type="chain" id="PRO_0000208248" description="Probable mannosyltransferase KTR7">
    <location>
        <begin position="1"/>
        <end position="517"/>
    </location>
</feature>
<feature type="topological domain" description="Cytoplasmic" evidence="2">
    <location>
        <begin position="1"/>
        <end position="23"/>
    </location>
</feature>
<feature type="transmembrane region" description="Helical; Signal-anchor for type II membrane protein">
    <location>
        <begin position="24"/>
        <end position="44"/>
    </location>
</feature>
<feature type="topological domain" description="Lumenal" evidence="2">
    <location>
        <begin position="45"/>
        <end position="517"/>
    </location>
</feature>
<feature type="region of interest" description="Stem region" evidence="1">
    <location>
        <begin position="45"/>
        <end position="85"/>
    </location>
</feature>
<feature type="region of interest" description="Catalytic" evidence="1">
    <location>
        <begin position="86"/>
        <end position="517"/>
    </location>
</feature>
<feature type="active site" description="Nucleophile" evidence="2">
    <location>
        <position position="367"/>
    </location>
</feature>
<feature type="glycosylation site" description="N-linked (GlcNAc...) asparagine" evidence="2">
    <location>
        <position position="89"/>
    </location>
</feature>
<feature type="glycosylation site" description="N-linked (GlcNAc...) asparagine" evidence="2">
    <location>
        <position position="144"/>
    </location>
</feature>
<accession>P40504</accession>
<accession>D6VVK1</accession>
<gene>
    <name type="primary">KTR7</name>
    <name type="ordered locus">YIL085C</name>
</gene>
<reference key="1">
    <citation type="journal article" date="1997" name="Nature">
        <title>The nucleotide sequence of Saccharomyces cerevisiae chromosome IX.</title>
        <authorList>
            <person name="Churcher C.M."/>
            <person name="Bowman S."/>
            <person name="Badcock K."/>
            <person name="Bankier A.T."/>
            <person name="Brown D."/>
            <person name="Chillingworth T."/>
            <person name="Connor R."/>
            <person name="Devlin K."/>
            <person name="Gentles S."/>
            <person name="Hamlin N."/>
            <person name="Harris D.E."/>
            <person name="Horsnell T."/>
            <person name="Hunt S."/>
            <person name="Jagels K."/>
            <person name="Jones M."/>
            <person name="Lye G."/>
            <person name="Moule S."/>
            <person name="Odell C."/>
            <person name="Pearson D."/>
            <person name="Rajandream M.A."/>
            <person name="Rice P."/>
            <person name="Rowley N."/>
            <person name="Skelton J."/>
            <person name="Smith V."/>
            <person name="Walsh S.V."/>
            <person name="Whitehead S."/>
            <person name="Barrell B.G."/>
        </authorList>
    </citation>
    <scope>NUCLEOTIDE SEQUENCE [LARGE SCALE GENOMIC DNA]</scope>
    <source>
        <strain>ATCC 204508 / S288c</strain>
    </source>
</reference>
<reference key="2">
    <citation type="journal article" date="2014" name="G3 (Bethesda)">
        <title>The reference genome sequence of Saccharomyces cerevisiae: Then and now.</title>
        <authorList>
            <person name="Engel S.R."/>
            <person name="Dietrich F.S."/>
            <person name="Fisk D.G."/>
            <person name="Binkley G."/>
            <person name="Balakrishnan R."/>
            <person name="Costanzo M.C."/>
            <person name="Dwight S.S."/>
            <person name="Hitz B.C."/>
            <person name="Karra K."/>
            <person name="Nash R.S."/>
            <person name="Weng S."/>
            <person name="Wong E.D."/>
            <person name="Lloyd P."/>
            <person name="Skrzypek M.S."/>
            <person name="Miyasato S.R."/>
            <person name="Simison M."/>
            <person name="Cherry J.M."/>
        </authorList>
    </citation>
    <scope>GENOME REANNOTATION</scope>
    <source>
        <strain>ATCC 204508 / S288c</strain>
    </source>
</reference>
<reference key="3">
    <citation type="journal article" date="1997" name="Yeast">
        <title>Completion of the Saccharomyces cerevisiae genome sequence allows identification of KTR5, KTR6 and KTR7 and definition of the nine-membered KRE2/MNT1 mannosyltransferase gene family in this organism.</title>
        <authorList>
            <person name="Lussier M."/>
            <person name="Sdicu A.-M."/>
            <person name="Winnett E."/>
            <person name="Vo D.H."/>
            <person name="Sheraton J."/>
            <person name="Duesterhoeft A."/>
            <person name="Storms R.K."/>
            <person name="Bussey H."/>
        </authorList>
    </citation>
    <scope>CHARACTERIZATION</scope>
</reference>
<reference key="4">
    <citation type="journal article" date="2003" name="Nature">
        <title>Global analysis of protein expression in yeast.</title>
        <authorList>
            <person name="Ghaemmaghami S."/>
            <person name="Huh W.-K."/>
            <person name="Bower K."/>
            <person name="Howson R.W."/>
            <person name="Belle A."/>
            <person name="Dephoure N."/>
            <person name="O'Shea E.K."/>
            <person name="Weissman J.S."/>
        </authorList>
    </citation>
    <scope>LEVEL OF PROTEIN EXPRESSION [LARGE SCALE ANALYSIS]</scope>
</reference>
<keyword id="KW-0325">Glycoprotein</keyword>
<keyword id="KW-0328">Glycosyltransferase</keyword>
<keyword id="KW-0472">Membrane</keyword>
<keyword id="KW-1185">Reference proteome</keyword>
<keyword id="KW-0735">Signal-anchor</keyword>
<keyword id="KW-0808">Transferase</keyword>
<keyword id="KW-0812">Transmembrane</keyword>
<keyword id="KW-1133">Transmembrane helix</keyword>
<dbReference type="EC" id="2.4.1.-"/>
<dbReference type="EMBL" id="Z46728">
    <property type="protein sequence ID" value="CAA86709.1"/>
    <property type="molecule type" value="Genomic_DNA"/>
</dbReference>
<dbReference type="EMBL" id="BK006942">
    <property type="protein sequence ID" value="DAA08467.1"/>
    <property type="molecule type" value="Genomic_DNA"/>
</dbReference>
<dbReference type="PIR" id="S49795">
    <property type="entry name" value="S49795"/>
</dbReference>
<dbReference type="RefSeq" id="NP_012181.3">
    <property type="nucleotide sequence ID" value="NM_001179433.3"/>
</dbReference>
<dbReference type="SMR" id="P40504"/>
<dbReference type="BioGRID" id="34907">
    <property type="interactions" value="54"/>
</dbReference>
<dbReference type="DIP" id="DIP-4677N"/>
<dbReference type="FunCoup" id="P40504">
    <property type="interactions" value="26"/>
</dbReference>
<dbReference type="IntAct" id="P40504">
    <property type="interactions" value="3"/>
</dbReference>
<dbReference type="MINT" id="P40504"/>
<dbReference type="STRING" id="4932.YIL085C"/>
<dbReference type="CAZy" id="GT15">
    <property type="family name" value="Glycosyltransferase Family 15"/>
</dbReference>
<dbReference type="GlyCosmos" id="P40504">
    <property type="glycosylation" value="2 sites, No reported glycans"/>
</dbReference>
<dbReference type="GlyGen" id="P40504">
    <property type="glycosylation" value="2 sites"/>
</dbReference>
<dbReference type="PaxDb" id="4932-YIL085C"/>
<dbReference type="PeptideAtlas" id="P40504"/>
<dbReference type="EnsemblFungi" id="YIL085C_mRNA">
    <property type="protein sequence ID" value="YIL085C"/>
    <property type="gene ID" value="YIL085C"/>
</dbReference>
<dbReference type="GeneID" id="854724"/>
<dbReference type="KEGG" id="sce:YIL085C"/>
<dbReference type="AGR" id="SGD:S000001347"/>
<dbReference type="SGD" id="S000001347">
    <property type="gene designation" value="KTR7"/>
</dbReference>
<dbReference type="VEuPathDB" id="FungiDB:YIL085C"/>
<dbReference type="eggNOG" id="KOG4472">
    <property type="taxonomic scope" value="Eukaryota"/>
</dbReference>
<dbReference type="GeneTree" id="ENSGT00940000176287"/>
<dbReference type="HOGENOM" id="CLU_024327_2_0_1"/>
<dbReference type="InParanoid" id="P40504"/>
<dbReference type="OMA" id="YNDFFEM"/>
<dbReference type="OrthoDB" id="439943at2759"/>
<dbReference type="BioCyc" id="YEAST:YIL085C-MONOMER"/>
<dbReference type="BioGRID-ORCS" id="854724">
    <property type="hits" value="1 hit in 10 CRISPR screens"/>
</dbReference>
<dbReference type="PRO" id="PR:P40504"/>
<dbReference type="Proteomes" id="UP000002311">
    <property type="component" value="Chromosome IX"/>
</dbReference>
<dbReference type="RNAct" id="P40504">
    <property type="molecule type" value="protein"/>
</dbReference>
<dbReference type="GO" id="GO:0005794">
    <property type="term" value="C:Golgi apparatus"/>
    <property type="evidence" value="ECO:0000250"/>
    <property type="project" value="SGD"/>
</dbReference>
<dbReference type="GO" id="GO:0016020">
    <property type="term" value="C:membrane"/>
    <property type="evidence" value="ECO:0007669"/>
    <property type="project" value="UniProtKB-SubCell"/>
</dbReference>
<dbReference type="GO" id="GO:0000026">
    <property type="term" value="F:alpha-1,2-mannosyltransferase activity"/>
    <property type="evidence" value="ECO:0000318"/>
    <property type="project" value="GO_Central"/>
</dbReference>
<dbReference type="GO" id="GO:0000030">
    <property type="term" value="F:mannosyltransferase activity"/>
    <property type="evidence" value="ECO:0000250"/>
    <property type="project" value="SGD"/>
</dbReference>
<dbReference type="GO" id="GO:0000032">
    <property type="term" value="P:cell wall mannoprotein biosynthetic process"/>
    <property type="evidence" value="ECO:0000318"/>
    <property type="project" value="GO_Central"/>
</dbReference>
<dbReference type="GO" id="GO:0031505">
    <property type="term" value="P:fungal-type cell wall organization"/>
    <property type="evidence" value="ECO:0000315"/>
    <property type="project" value="SGD"/>
</dbReference>
<dbReference type="GO" id="GO:0006487">
    <property type="term" value="P:protein N-linked glycosylation"/>
    <property type="evidence" value="ECO:0000250"/>
    <property type="project" value="SGD"/>
</dbReference>
<dbReference type="Gene3D" id="3.90.550.10">
    <property type="entry name" value="Spore Coat Polysaccharide Biosynthesis Protein SpsA, Chain A"/>
    <property type="match status" value="1"/>
</dbReference>
<dbReference type="InterPro" id="IPR002685">
    <property type="entry name" value="Glyco_trans_15"/>
</dbReference>
<dbReference type="InterPro" id="IPR029044">
    <property type="entry name" value="Nucleotide-diphossugar_trans"/>
</dbReference>
<dbReference type="PANTHER" id="PTHR31121">
    <property type="entry name" value="ALPHA-1,2 MANNOSYLTRANSFERASE KTR1"/>
    <property type="match status" value="1"/>
</dbReference>
<dbReference type="PANTHER" id="PTHR31121:SF2">
    <property type="entry name" value="MANNOSYLTRANSFERASE KTR5-RELATED"/>
    <property type="match status" value="1"/>
</dbReference>
<dbReference type="Pfam" id="PF01793">
    <property type="entry name" value="Glyco_transf_15"/>
    <property type="match status" value="2"/>
</dbReference>
<dbReference type="PIRSF" id="PIRSF018153">
    <property type="entry name" value="Glyco_trans_15"/>
    <property type="match status" value="1"/>
</dbReference>
<dbReference type="SUPFAM" id="SSF53448">
    <property type="entry name" value="Nucleotide-diphospho-sugar transferases"/>
    <property type="match status" value="1"/>
</dbReference>
<proteinExistence type="evidence at protein level"/>
<name>KTR7_YEAST</name>